<dbReference type="EMBL" id="CP000950">
    <property type="protein sequence ID" value="ACA67664.1"/>
    <property type="molecule type" value="Genomic_DNA"/>
</dbReference>
<dbReference type="RefSeq" id="WP_002208551.1">
    <property type="nucleotide sequence ID" value="NZ_CP009792.1"/>
</dbReference>
<dbReference type="SMR" id="B1JSH3"/>
<dbReference type="KEGG" id="ypy:YPK_1370"/>
<dbReference type="PATRIC" id="fig|502800.11.peg.2005"/>
<dbReference type="GO" id="GO:0005886">
    <property type="term" value="C:plasma membrane"/>
    <property type="evidence" value="ECO:0007669"/>
    <property type="project" value="UniProtKB-SubCell"/>
</dbReference>
<dbReference type="HAMAP" id="MF_01566">
    <property type="entry name" value="UPF0370"/>
    <property type="match status" value="1"/>
</dbReference>
<dbReference type="InterPro" id="IPR020910">
    <property type="entry name" value="UPF0370"/>
</dbReference>
<dbReference type="NCBIfam" id="NF010185">
    <property type="entry name" value="PRK13664.1"/>
    <property type="match status" value="1"/>
</dbReference>
<dbReference type="Pfam" id="PF13980">
    <property type="entry name" value="UPF0370"/>
    <property type="match status" value="1"/>
</dbReference>
<organism>
    <name type="scientific">Yersinia pseudotuberculosis serotype O:3 (strain YPIII)</name>
    <dbReference type="NCBI Taxonomy" id="502800"/>
    <lineage>
        <taxon>Bacteria</taxon>
        <taxon>Pseudomonadati</taxon>
        <taxon>Pseudomonadota</taxon>
        <taxon>Gammaproteobacteria</taxon>
        <taxon>Enterobacterales</taxon>
        <taxon>Yersiniaceae</taxon>
        <taxon>Yersinia</taxon>
    </lineage>
</organism>
<proteinExistence type="inferred from homology"/>
<evidence type="ECO:0000255" key="1">
    <source>
        <dbReference type="HAMAP-Rule" id="MF_01566"/>
    </source>
</evidence>
<evidence type="ECO:0000256" key="2">
    <source>
        <dbReference type="SAM" id="MobiDB-lite"/>
    </source>
</evidence>
<name>Y1370_YERPY</name>
<feature type="chain" id="PRO_1000199738" description="UPF0370 protein YPK_1370">
    <location>
        <begin position="1"/>
        <end position="64"/>
    </location>
</feature>
<feature type="transmembrane region" description="Helical" evidence="1">
    <location>
        <begin position="3"/>
        <end position="23"/>
    </location>
</feature>
<feature type="region of interest" description="Disordered" evidence="2">
    <location>
        <begin position="36"/>
        <end position="64"/>
    </location>
</feature>
<feature type="compositionally biased region" description="Basic and acidic residues" evidence="2">
    <location>
        <begin position="36"/>
        <end position="47"/>
    </location>
</feature>
<comment type="subcellular location">
    <subcellularLocation>
        <location evidence="1">Cell membrane</location>
        <topology evidence="1">Single-pass membrane protein</topology>
    </subcellularLocation>
</comment>
<comment type="similarity">
    <text evidence="1">Belongs to the UPF0370 family.</text>
</comment>
<reference key="1">
    <citation type="submission" date="2008-02" db="EMBL/GenBank/DDBJ databases">
        <title>Complete sequence of Yersinia pseudotuberculosis YPIII.</title>
        <authorList>
            <consortium name="US DOE Joint Genome Institute"/>
            <person name="Copeland A."/>
            <person name="Lucas S."/>
            <person name="Lapidus A."/>
            <person name="Glavina del Rio T."/>
            <person name="Dalin E."/>
            <person name="Tice H."/>
            <person name="Bruce D."/>
            <person name="Goodwin L."/>
            <person name="Pitluck S."/>
            <person name="Munk A.C."/>
            <person name="Brettin T."/>
            <person name="Detter J.C."/>
            <person name="Han C."/>
            <person name="Tapia R."/>
            <person name="Schmutz J."/>
            <person name="Larimer F."/>
            <person name="Land M."/>
            <person name="Hauser L."/>
            <person name="Challacombe J.F."/>
            <person name="Green L."/>
            <person name="Lindler L.E."/>
            <person name="Nikolich M.P."/>
            <person name="Richardson P."/>
        </authorList>
    </citation>
    <scope>NUCLEOTIDE SEQUENCE [LARGE SCALE GENOMIC DNA]</scope>
    <source>
        <strain>YPIII</strain>
    </source>
</reference>
<keyword id="KW-1003">Cell membrane</keyword>
<keyword id="KW-0472">Membrane</keyword>
<keyword id="KW-0812">Transmembrane</keyword>
<keyword id="KW-1133">Transmembrane helix</keyword>
<accession>B1JSH3</accession>
<gene>
    <name type="ordered locus">YPK_1370</name>
</gene>
<protein>
    <recommendedName>
        <fullName evidence="1">UPF0370 protein YPK_1370</fullName>
    </recommendedName>
</protein>
<sequence length="64" mass="7896">MQWLADYWWIILILLVGMILNGIKELRRLDHKRFLDNKPELPPHRDNNAQWDDEDDWPDQNKKK</sequence>